<organism>
    <name type="scientific">Streptococcus pyogenes serotype M3 (strain SSI-1)</name>
    <dbReference type="NCBI Taxonomy" id="193567"/>
    <lineage>
        <taxon>Bacteria</taxon>
        <taxon>Bacillati</taxon>
        <taxon>Bacillota</taxon>
        <taxon>Bacilli</taxon>
        <taxon>Lactobacillales</taxon>
        <taxon>Streptococcaceae</taxon>
        <taxon>Streptococcus</taxon>
    </lineage>
</organism>
<comment type="function">
    <text evidence="1">Forms part of the ribosomal stalk which helps the ribosome interact with GTP-bound translation factors. Is thus essential for accurate translation.</text>
</comment>
<comment type="subunit">
    <text evidence="1">Homodimer. Part of the ribosomal stalk of the 50S ribosomal subunit. Forms a multimeric L10(L12)X complex, where L10 forms an elongated spine to which 2 to 4 L12 dimers bind in a sequential fashion. Binds GTP-bound translation factors.</text>
</comment>
<comment type="similarity">
    <text evidence="1">Belongs to the bacterial ribosomal protein bL12 family.</text>
</comment>
<reference key="1">
    <citation type="journal article" date="2003" name="Genome Res.">
        <title>Genome sequence of an M3 strain of Streptococcus pyogenes reveals a large-scale genomic rearrangement in invasive strains and new insights into phage evolution.</title>
        <authorList>
            <person name="Nakagawa I."/>
            <person name="Kurokawa K."/>
            <person name="Yamashita A."/>
            <person name="Nakata M."/>
            <person name="Tomiyasu Y."/>
            <person name="Okahashi N."/>
            <person name="Kawabata S."/>
            <person name="Yamazaki K."/>
            <person name="Shiba T."/>
            <person name="Yasunaga T."/>
            <person name="Hayashi H."/>
            <person name="Hattori M."/>
            <person name="Hamada S."/>
        </authorList>
    </citation>
    <scope>NUCLEOTIDE SEQUENCE [LARGE SCALE GENOMIC DNA]</scope>
    <source>
        <strain>SSI-1</strain>
    </source>
</reference>
<evidence type="ECO:0000255" key="1">
    <source>
        <dbReference type="HAMAP-Rule" id="MF_00368"/>
    </source>
</evidence>
<evidence type="ECO:0000305" key="2"/>
<protein>
    <recommendedName>
        <fullName evidence="1">Large ribosomal subunit protein bL12</fullName>
    </recommendedName>
    <alternativeName>
        <fullName evidence="2">50S ribosomal protein L7/L12</fullName>
    </alternativeName>
</protein>
<accession>P0DE03</accession>
<accession>P58076</accession>
<accession>P66064</accession>
<sequence length="121" mass="12256">MALNIENIIAEIKEASILELNDLVKAIEEEFGVTAAAPVAAAAAGGAEEAAKDSFDVELTSAGDKKVGVIKAVREITGLGLKEAKGLVDGAPANVKEGVAAAEAEEIKAKLEEAGATITLK</sequence>
<keyword id="KW-0687">Ribonucleoprotein</keyword>
<keyword id="KW-0689">Ribosomal protein</keyword>
<gene>
    <name evidence="1" type="primary">rplL</name>
    <name type="ordered locus">SPs0955</name>
</gene>
<proteinExistence type="inferred from homology"/>
<dbReference type="EMBL" id="BA000034">
    <property type="protein sequence ID" value="BAC64050.1"/>
    <property type="molecule type" value="Genomic_DNA"/>
</dbReference>
<dbReference type="RefSeq" id="WP_002984819.1">
    <property type="nucleotide sequence ID" value="NC_004606.1"/>
</dbReference>
<dbReference type="SMR" id="P0DE03"/>
<dbReference type="GeneID" id="69900915"/>
<dbReference type="KEGG" id="sps:SPs0955"/>
<dbReference type="HOGENOM" id="CLU_086499_3_2_9"/>
<dbReference type="GO" id="GO:0022625">
    <property type="term" value="C:cytosolic large ribosomal subunit"/>
    <property type="evidence" value="ECO:0007669"/>
    <property type="project" value="TreeGrafter"/>
</dbReference>
<dbReference type="GO" id="GO:0003729">
    <property type="term" value="F:mRNA binding"/>
    <property type="evidence" value="ECO:0007669"/>
    <property type="project" value="TreeGrafter"/>
</dbReference>
<dbReference type="GO" id="GO:0003735">
    <property type="term" value="F:structural constituent of ribosome"/>
    <property type="evidence" value="ECO:0007669"/>
    <property type="project" value="InterPro"/>
</dbReference>
<dbReference type="GO" id="GO:0006412">
    <property type="term" value="P:translation"/>
    <property type="evidence" value="ECO:0007669"/>
    <property type="project" value="UniProtKB-UniRule"/>
</dbReference>
<dbReference type="CDD" id="cd00387">
    <property type="entry name" value="Ribosomal_L7_L12"/>
    <property type="match status" value="1"/>
</dbReference>
<dbReference type="FunFam" id="3.30.1390.10:FF:000001">
    <property type="entry name" value="50S ribosomal protein L7/L12"/>
    <property type="match status" value="1"/>
</dbReference>
<dbReference type="Gene3D" id="3.30.1390.10">
    <property type="match status" value="1"/>
</dbReference>
<dbReference type="Gene3D" id="1.20.5.710">
    <property type="entry name" value="Single helix bin"/>
    <property type="match status" value="1"/>
</dbReference>
<dbReference type="HAMAP" id="MF_00368">
    <property type="entry name" value="Ribosomal_bL12"/>
    <property type="match status" value="1"/>
</dbReference>
<dbReference type="InterPro" id="IPR000206">
    <property type="entry name" value="Ribosomal_bL12"/>
</dbReference>
<dbReference type="InterPro" id="IPR013823">
    <property type="entry name" value="Ribosomal_bL12_C"/>
</dbReference>
<dbReference type="InterPro" id="IPR014719">
    <property type="entry name" value="Ribosomal_bL12_C/ClpS-like"/>
</dbReference>
<dbReference type="InterPro" id="IPR008932">
    <property type="entry name" value="Ribosomal_bL12_oligo"/>
</dbReference>
<dbReference type="InterPro" id="IPR036235">
    <property type="entry name" value="Ribosomal_bL12_oligo_N_sf"/>
</dbReference>
<dbReference type="NCBIfam" id="TIGR00855">
    <property type="entry name" value="L12"/>
    <property type="match status" value="1"/>
</dbReference>
<dbReference type="PANTHER" id="PTHR45987">
    <property type="entry name" value="39S RIBOSOMAL PROTEIN L12"/>
    <property type="match status" value="1"/>
</dbReference>
<dbReference type="PANTHER" id="PTHR45987:SF4">
    <property type="entry name" value="LARGE RIBOSOMAL SUBUNIT PROTEIN BL12M"/>
    <property type="match status" value="1"/>
</dbReference>
<dbReference type="Pfam" id="PF00542">
    <property type="entry name" value="Ribosomal_L12"/>
    <property type="match status" value="1"/>
</dbReference>
<dbReference type="Pfam" id="PF16320">
    <property type="entry name" value="Ribosomal_L12_N"/>
    <property type="match status" value="1"/>
</dbReference>
<dbReference type="SUPFAM" id="SSF54736">
    <property type="entry name" value="ClpS-like"/>
    <property type="match status" value="1"/>
</dbReference>
<dbReference type="SUPFAM" id="SSF48300">
    <property type="entry name" value="Ribosomal protein L7/12, oligomerisation (N-terminal) domain"/>
    <property type="match status" value="1"/>
</dbReference>
<name>RL7_STRPQ</name>
<feature type="chain" id="PRO_0000411491" description="Large ribosomal subunit protein bL12">
    <location>
        <begin position="1"/>
        <end position="121"/>
    </location>
</feature>